<accession>Q8D4N8</accession>
<dbReference type="EC" id="2.8.4.4" evidence="1"/>
<dbReference type="EMBL" id="AE016796">
    <property type="protein sequence ID" value="AAO08148.1"/>
    <property type="molecule type" value="Genomic_DNA"/>
</dbReference>
<dbReference type="RefSeq" id="WP_011082143.1">
    <property type="nucleotide sequence ID" value="NC_004460.2"/>
</dbReference>
<dbReference type="SMR" id="Q8D4N8"/>
<dbReference type="KEGG" id="vvu:VV2_1254"/>
<dbReference type="HOGENOM" id="CLU_018697_0_0_6"/>
<dbReference type="Proteomes" id="UP000002275">
    <property type="component" value="Chromosome 2"/>
</dbReference>
<dbReference type="GO" id="GO:0005829">
    <property type="term" value="C:cytosol"/>
    <property type="evidence" value="ECO:0007669"/>
    <property type="project" value="TreeGrafter"/>
</dbReference>
<dbReference type="GO" id="GO:0051539">
    <property type="term" value="F:4 iron, 4 sulfur cluster binding"/>
    <property type="evidence" value="ECO:0007669"/>
    <property type="project" value="UniProtKB-UniRule"/>
</dbReference>
<dbReference type="GO" id="GO:0035599">
    <property type="term" value="F:aspartic acid methylthiotransferase activity"/>
    <property type="evidence" value="ECO:0007669"/>
    <property type="project" value="TreeGrafter"/>
</dbReference>
<dbReference type="GO" id="GO:0046872">
    <property type="term" value="F:metal ion binding"/>
    <property type="evidence" value="ECO:0007669"/>
    <property type="project" value="UniProtKB-KW"/>
</dbReference>
<dbReference type="GO" id="GO:0103039">
    <property type="term" value="F:protein methylthiotransferase activity"/>
    <property type="evidence" value="ECO:0007669"/>
    <property type="project" value="UniProtKB-EC"/>
</dbReference>
<dbReference type="GO" id="GO:0006400">
    <property type="term" value="P:tRNA modification"/>
    <property type="evidence" value="ECO:0007669"/>
    <property type="project" value="InterPro"/>
</dbReference>
<dbReference type="CDD" id="cd01335">
    <property type="entry name" value="Radical_SAM"/>
    <property type="match status" value="1"/>
</dbReference>
<dbReference type="FunFam" id="2.40.50.140:FF:000060">
    <property type="entry name" value="Ribosomal protein S12 methylthiotransferase RimO"/>
    <property type="match status" value="1"/>
</dbReference>
<dbReference type="FunFam" id="3.40.50.12160:FF:000002">
    <property type="entry name" value="Ribosomal protein S12 methylthiotransferase RimO"/>
    <property type="match status" value="1"/>
</dbReference>
<dbReference type="FunFam" id="3.80.30.20:FF:000001">
    <property type="entry name" value="tRNA-2-methylthio-N(6)-dimethylallyladenosine synthase 2"/>
    <property type="match status" value="1"/>
</dbReference>
<dbReference type="Gene3D" id="3.40.50.12160">
    <property type="entry name" value="Methylthiotransferase, N-terminal domain"/>
    <property type="match status" value="1"/>
</dbReference>
<dbReference type="Gene3D" id="2.40.50.140">
    <property type="entry name" value="Nucleic acid-binding proteins"/>
    <property type="match status" value="1"/>
</dbReference>
<dbReference type="Gene3D" id="3.80.30.20">
    <property type="entry name" value="tm_1862 like domain"/>
    <property type="match status" value="1"/>
</dbReference>
<dbReference type="HAMAP" id="MF_01865">
    <property type="entry name" value="MTTase_RimO"/>
    <property type="match status" value="1"/>
</dbReference>
<dbReference type="InterPro" id="IPR006638">
    <property type="entry name" value="Elp3/MiaA/NifB-like_rSAM"/>
</dbReference>
<dbReference type="InterPro" id="IPR005839">
    <property type="entry name" value="Methylthiotransferase"/>
</dbReference>
<dbReference type="InterPro" id="IPR020612">
    <property type="entry name" value="Methylthiotransferase_CS"/>
</dbReference>
<dbReference type="InterPro" id="IPR013848">
    <property type="entry name" value="Methylthiotransferase_N"/>
</dbReference>
<dbReference type="InterPro" id="IPR038135">
    <property type="entry name" value="Methylthiotransferase_N_sf"/>
</dbReference>
<dbReference type="InterPro" id="IPR012340">
    <property type="entry name" value="NA-bd_OB-fold"/>
</dbReference>
<dbReference type="InterPro" id="IPR005840">
    <property type="entry name" value="Ribosomal_uS12_MeSTrfase_RimO"/>
</dbReference>
<dbReference type="InterPro" id="IPR007197">
    <property type="entry name" value="rSAM"/>
</dbReference>
<dbReference type="InterPro" id="IPR023404">
    <property type="entry name" value="rSAM_horseshoe"/>
</dbReference>
<dbReference type="InterPro" id="IPR002792">
    <property type="entry name" value="TRAM_dom"/>
</dbReference>
<dbReference type="NCBIfam" id="TIGR01125">
    <property type="entry name" value="30S ribosomal protein S12 methylthiotransferase RimO"/>
    <property type="match status" value="1"/>
</dbReference>
<dbReference type="NCBIfam" id="TIGR00089">
    <property type="entry name" value="MiaB/RimO family radical SAM methylthiotransferase"/>
    <property type="match status" value="1"/>
</dbReference>
<dbReference type="PANTHER" id="PTHR43837">
    <property type="entry name" value="RIBOSOMAL PROTEIN S12 METHYLTHIOTRANSFERASE RIMO"/>
    <property type="match status" value="1"/>
</dbReference>
<dbReference type="PANTHER" id="PTHR43837:SF1">
    <property type="entry name" value="RIBOSOMAL PROTEIN US12 METHYLTHIOTRANSFERASE RIMO"/>
    <property type="match status" value="1"/>
</dbReference>
<dbReference type="Pfam" id="PF04055">
    <property type="entry name" value="Radical_SAM"/>
    <property type="match status" value="1"/>
</dbReference>
<dbReference type="Pfam" id="PF18693">
    <property type="entry name" value="TRAM_2"/>
    <property type="match status" value="1"/>
</dbReference>
<dbReference type="Pfam" id="PF00919">
    <property type="entry name" value="UPF0004"/>
    <property type="match status" value="1"/>
</dbReference>
<dbReference type="SFLD" id="SFLDG01082">
    <property type="entry name" value="B12-binding_domain_containing"/>
    <property type="match status" value="1"/>
</dbReference>
<dbReference type="SFLD" id="SFLDG01061">
    <property type="entry name" value="methylthiotransferase"/>
    <property type="match status" value="1"/>
</dbReference>
<dbReference type="SFLD" id="SFLDF00274">
    <property type="entry name" value="ribosomal_protein_S12_methylth"/>
    <property type="match status" value="1"/>
</dbReference>
<dbReference type="SMART" id="SM00729">
    <property type="entry name" value="Elp3"/>
    <property type="match status" value="1"/>
</dbReference>
<dbReference type="SUPFAM" id="SSF102114">
    <property type="entry name" value="Radical SAM enzymes"/>
    <property type="match status" value="1"/>
</dbReference>
<dbReference type="PROSITE" id="PS51449">
    <property type="entry name" value="MTTASE_N"/>
    <property type="match status" value="1"/>
</dbReference>
<dbReference type="PROSITE" id="PS01278">
    <property type="entry name" value="MTTASE_RADICAL"/>
    <property type="match status" value="1"/>
</dbReference>
<dbReference type="PROSITE" id="PS51918">
    <property type="entry name" value="RADICAL_SAM"/>
    <property type="match status" value="1"/>
</dbReference>
<dbReference type="PROSITE" id="PS50926">
    <property type="entry name" value="TRAM"/>
    <property type="match status" value="1"/>
</dbReference>
<comment type="function">
    <text evidence="1">Catalyzes the methylthiolation of an aspartic acid residue of ribosomal protein uS12.</text>
</comment>
<comment type="catalytic activity">
    <reaction evidence="1">
        <text>L-aspartate(89)-[ribosomal protein uS12]-hydrogen + (sulfur carrier)-SH + AH2 + 2 S-adenosyl-L-methionine = 3-methylsulfanyl-L-aspartate(89)-[ribosomal protein uS12]-hydrogen + (sulfur carrier)-H + 5'-deoxyadenosine + L-methionine + A + S-adenosyl-L-homocysteine + 2 H(+)</text>
        <dbReference type="Rhea" id="RHEA:37087"/>
        <dbReference type="Rhea" id="RHEA-COMP:10460"/>
        <dbReference type="Rhea" id="RHEA-COMP:10461"/>
        <dbReference type="Rhea" id="RHEA-COMP:14737"/>
        <dbReference type="Rhea" id="RHEA-COMP:14739"/>
        <dbReference type="ChEBI" id="CHEBI:13193"/>
        <dbReference type="ChEBI" id="CHEBI:15378"/>
        <dbReference type="ChEBI" id="CHEBI:17319"/>
        <dbReference type="ChEBI" id="CHEBI:17499"/>
        <dbReference type="ChEBI" id="CHEBI:29917"/>
        <dbReference type="ChEBI" id="CHEBI:29961"/>
        <dbReference type="ChEBI" id="CHEBI:57844"/>
        <dbReference type="ChEBI" id="CHEBI:57856"/>
        <dbReference type="ChEBI" id="CHEBI:59789"/>
        <dbReference type="ChEBI" id="CHEBI:64428"/>
        <dbReference type="ChEBI" id="CHEBI:73599"/>
        <dbReference type="EC" id="2.8.4.4"/>
    </reaction>
</comment>
<comment type="cofactor">
    <cofactor evidence="1">
        <name>[4Fe-4S] cluster</name>
        <dbReference type="ChEBI" id="CHEBI:49883"/>
    </cofactor>
    <text evidence="1">Binds 2 [4Fe-4S] clusters. One cluster is coordinated with 3 cysteines and an exchangeable S-adenosyl-L-methionine.</text>
</comment>
<comment type="subcellular location">
    <subcellularLocation>
        <location evidence="1">Cytoplasm</location>
    </subcellularLocation>
</comment>
<comment type="similarity">
    <text evidence="1">Belongs to the methylthiotransferase family. RimO subfamily.</text>
</comment>
<proteinExistence type="inferred from homology"/>
<gene>
    <name evidence="1" type="primary">rimO</name>
    <name type="ordered locus">VV2_1254</name>
</gene>
<name>RIMO_VIBVU</name>
<organism>
    <name type="scientific">Vibrio vulnificus (strain CMCP6)</name>
    <dbReference type="NCBI Taxonomy" id="216895"/>
    <lineage>
        <taxon>Bacteria</taxon>
        <taxon>Pseudomonadati</taxon>
        <taxon>Pseudomonadota</taxon>
        <taxon>Gammaproteobacteria</taxon>
        <taxon>Vibrionales</taxon>
        <taxon>Vibrionaceae</taxon>
        <taxon>Vibrio</taxon>
    </lineage>
</organism>
<evidence type="ECO:0000255" key="1">
    <source>
        <dbReference type="HAMAP-Rule" id="MF_01865"/>
    </source>
</evidence>
<evidence type="ECO:0000255" key="2">
    <source>
        <dbReference type="PROSITE-ProRule" id="PRU01266"/>
    </source>
</evidence>
<feature type="chain" id="PRO_0000375065" description="Ribosomal protein uS12 methylthiotransferase RimO">
    <location>
        <begin position="1"/>
        <end position="469"/>
    </location>
</feature>
<feature type="domain" description="MTTase N-terminal" evidence="1">
    <location>
        <begin position="34"/>
        <end position="144"/>
    </location>
</feature>
<feature type="domain" description="Radical SAM core" evidence="2">
    <location>
        <begin position="162"/>
        <end position="399"/>
    </location>
</feature>
<feature type="domain" description="TRAM" evidence="1">
    <location>
        <begin position="402"/>
        <end position="468"/>
    </location>
</feature>
<feature type="binding site" evidence="1">
    <location>
        <position position="43"/>
    </location>
    <ligand>
        <name>[4Fe-4S] cluster</name>
        <dbReference type="ChEBI" id="CHEBI:49883"/>
        <label>1</label>
    </ligand>
</feature>
<feature type="binding site" evidence="1">
    <location>
        <position position="79"/>
    </location>
    <ligand>
        <name>[4Fe-4S] cluster</name>
        <dbReference type="ChEBI" id="CHEBI:49883"/>
        <label>1</label>
    </ligand>
</feature>
<feature type="binding site" evidence="1">
    <location>
        <position position="108"/>
    </location>
    <ligand>
        <name>[4Fe-4S] cluster</name>
        <dbReference type="ChEBI" id="CHEBI:49883"/>
        <label>1</label>
    </ligand>
</feature>
<feature type="binding site" evidence="1">
    <location>
        <position position="176"/>
    </location>
    <ligand>
        <name>[4Fe-4S] cluster</name>
        <dbReference type="ChEBI" id="CHEBI:49883"/>
        <label>2</label>
        <note>4Fe-4S-S-AdoMet</note>
    </ligand>
</feature>
<feature type="binding site" evidence="1">
    <location>
        <position position="180"/>
    </location>
    <ligand>
        <name>[4Fe-4S] cluster</name>
        <dbReference type="ChEBI" id="CHEBI:49883"/>
        <label>2</label>
        <note>4Fe-4S-S-AdoMet</note>
    </ligand>
</feature>
<feature type="binding site" evidence="1">
    <location>
        <position position="183"/>
    </location>
    <ligand>
        <name>[4Fe-4S] cluster</name>
        <dbReference type="ChEBI" id="CHEBI:49883"/>
        <label>2</label>
        <note>4Fe-4S-S-AdoMet</note>
    </ligand>
</feature>
<sequence>MTVQTFTPNQTTTLDTAKKTIEQQSQELTPSGGNKIGFVSLGCPKNLVDSERILTQLRTEGYEIVNSYHDSDVVIVNTCGFIDSAVQESLDTIGEALKENGKVIVTGCLGAREDEIREVHPGVLGITGPHAYENVLEHVHQFAPKPEHNPFTSLVPDHGVKLTPKHYAYLKISEGCNHRCTFCIIPSMRGDLVSRPVGEILSEAERLKNAGVKELLVISQDTSAYGVDSKHSLGFANGSPVRQNIKALSEELGKMGIWVRLHYVYPYPHVDDLIPLMAEGKILPYLDIPFQHASPNVLKAMKRPGRAERTLDQIKKWREICPELVIRSTFIVGFPGETDEDFEMLLEWLKEAQLDRVGCFKYSPVEGAAANDIDDQISEEVKQERFECFMLVQQEISAAKLQKRIGSTMKVIIDEVDEEGAIGRTYADAPEIDGLVYLNGETSLKAGELVDVLIEHADEYDLWGSLVRA</sequence>
<keyword id="KW-0004">4Fe-4S</keyword>
<keyword id="KW-0963">Cytoplasm</keyword>
<keyword id="KW-0408">Iron</keyword>
<keyword id="KW-0411">Iron-sulfur</keyword>
<keyword id="KW-0479">Metal-binding</keyword>
<keyword id="KW-0949">S-adenosyl-L-methionine</keyword>
<keyword id="KW-0808">Transferase</keyword>
<reference key="1">
    <citation type="submission" date="2002-12" db="EMBL/GenBank/DDBJ databases">
        <title>Complete genome sequence of Vibrio vulnificus CMCP6.</title>
        <authorList>
            <person name="Rhee J.H."/>
            <person name="Kim S.Y."/>
            <person name="Chung S.S."/>
            <person name="Kim J.J."/>
            <person name="Moon Y.H."/>
            <person name="Jeong H."/>
            <person name="Choy H.E."/>
        </authorList>
    </citation>
    <scope>NUCLEOTIDE SEQUENCE [LARGE SCALE GENOMIC DNA]</scope>
    <source>
        <strain>CMCP6</strain>
    </source>
</reference>
<protein>
    <recommendedName>
        <fullName evidence="1">Ribosomal protein uS12 methylthiotransferase RimO</fullName>
        <shortName evidence="1">uS12 MTTase</shortName>
        <shortName evidence="1">uS12 methylthiotransferase</shortName>
        <ecNumber evidence="1">2.8.4.4</ecNumber>
    </recommendedName>
    <alternativeName>
        <fullName evidence="1">Ribosomal protein uS12 (aspartate-C(3))-methylthiotransferase</fullName>
    </alternativeName>
    <alternativeName>
        <fullName evidence="1">Ribosome maturation factor RimO</fullName>
    </alternativeName>
</protein>